<name>MPGP_ECO7I</name>
<gene>
    <name type="ordered locus">ECIAI39_1102</name>
</gene>
<accession>B7NRC7</accession>
<keyword id="KW-0963">Cytoplasm</keyword>
<keyword id="KW-0378">Hydrolase</keyword>
<keyword id="KW-0460">Magnesium</keyword>
<keyword id="KW-0479">Metal-binding</keyword>
<comment type="catalytic activity">
    <reaction evidence="1">
        <text>2-O-(alpha-D-mannosyl)-3-phosphoglycerate + H2O = (2R)-2-O-(alpha-D-mannosyl)-glycerate + phosphate</text>
        <dbReference type="Rhea" id="RHEA:19309"/>
        <dbReference type="ChEBI" id="CHEBI:15377"/>
        <dbReference type="ChEBI" id="CHEBI:43474"/>
        <dbReference type="ChEBI" id="CHEBI:57541"/>
        <dbReference type="ChEBI" id="CHEBI:57744"/>
        <dbReference type="EC" id="3.1.3.70"/>
    </reaction>
</comment>
<comment type="cofactor">
    <cofactor evidence="1">
        <name>Mg(2+)</name>
        <dbReference type="ChEBI" id="CHEBI:18420"/>
    </cofactor>
</comment>
<comment type="subcellular location">
    <subcellularLocation>
        <location evidence="1">Cytoplasm</location>
    </subcellularLocation>
</comment>
<comment type="similarity">
    <text evidence="1">Belongs to the HAD-like hydrolase superfamily. MPGP family.</text>
</comment>
<sequence length="271" mass="30498">MFSIQQPLLVFSDLDGTLLDSHSYDWQPAAPWLSRLHEANIPVILCSSKTSAEMLYLQKMLGLQGLPLIAENGAVIQLAEQWQDIDGFPRIISGISHGEICQVLNTLREKEHFKFTTFDDVDDATIAEWTGLSRSQAALTQLHEASVTLIWRDSDEHMAQFIARLNELGLQFMQGARFWHVLDASAGKDQAANWIIATYQQLSGRRPTTLGLGDGPNDAPLLEVMDYAVIVKGLNREGVHLHDEDPARVWRTQREGPEGWREGLDHFFPAR</sequence>
<organism>
    <name type="scientific">Escherichia coli O7:K1 (strain IAI39 / ExPEC)</name>
    <dbReference type="NCBI Taxonomy" id="585057"/>
    <lineage>
        <taxon>Bacteria</taxon>
        <taxon>Pseudomonadati</taxon>
        <taxon>Pseudomonadota</taxon>
        <taxon>Gammaproteobacteria</taxon>
        <taxon>Enterobacterales</taxon>
        <taxon>Enterobacteriaceae</taxon>
        <taxon>Escherichia</taxon>
    </lineage>
</organism>
<reference key="1">
    <citation type="journal article" date="2009" name="PLoS Genet.">
        <title>Organised genome dynamics in the Escherichia coli species results in highly diverse adaptive paths.</title>
        <authorList>
            <person name="Touchon M."/>
            <person name="Hoede C."/>
            <person name="Tenaillon O."/>
            <person name="Barbe V."/>
            <person name="Baeriswyl S."/>
            <person name="Bidet P."/>
            <person name="Bingen E."/>
            <person name="Bonacorsi S."/>
            <person name="Bouchier C."/>
            <person name="Bouvet O."/>
            <person name="Calteau A."/>
            <person name="Chiapello H."/>
            <person name="Clermont O."/>
            <person name="Cruveiller S."/>
            <person name="Danchin A."/>
            <person name="Diard M."/>
            <person name="Dossat C."/>
            <person name="Karoui M.E."/>
            <person name="Frapy E."/>
            <person name="Garry L."/>
            <person name="Ghigo J.M."/>
            <person name="Gilles A.M."/>
            <person name="Johnson J."/>
            <person name="Le Bouguenec C."/>
            <person name="Lescat M."/>
            <person name="Mangenot S."/>
            <person name="Martinez-Jehanne V."/>
            <person name="Matic I."/>
            <person name="Nassif X."/>
            <person name="Oztas S."/>
            <person name="Petit M.A."/>
            <person name="Pichon C."/>
            <person name="Rouy Z."/>
            <person name="Ruf C.S."/>
            <person name="Schneider D."/>
            <person name="Tourret J."/>
            <person name="Vacherie B."/>
            <person name="Vallenet D."/>
            <person name="Medigue C."/>
            <person name="Rocha E.P.C."/>
            <person name="Denamur E."/>
        </authorList>
    </citation>
    <scope>NUCLEOTIDE SEQUENCE [LARGE SCALE GENOMIC DNA]</scope>
    <source>
        <strain>IAI39 / ExPEC</strain>
    </source>
</reference>
<evidence type="ECO:0000255" key="1">
    <source>
        <dbReference type="HAMAP-Rule" id="MF_00617"/>
    </source>
</evidence>
<dbReference type="EC" id="3.1.3.70" evidence="1"/>
<dbReference type="EMBL" id="CU928164">
    <property type="protein sequence ID" value="CAR17236.1"/>
    <property type="molecule type" value="Genomic_DNA"/>
</dbReference>
<dbReference type="RefSeq" id="WP_000491480.1">
    <property type="nucleotide sequence ID" value="NC_011750.1"/>
</dbReference>
<dbReference type="RefSeq" id="YP_002407114.1">
    <property type="nucleotide sequence ID" value="NC_011750.1"/>
</dbReference>
<dbReference type="SMR" id="B7NRC7"/>
<dbReference type="STRING" id="585057.ECIAI39_1102"/>
<dbReference type="KEGG" id="ect:ECIAI39_1102"/>
<dbReference type="PATRIC" id="fig|585057.6.peg.1151"/>
<dbReference type="HOGENOM" id="CLU_063016_1_0_6"/>
<dbReference type="Proteomes" id="UP000000749">
    <property type="component" value="Chromosome"/>
</dbReference>
<dbReference type="GO" id="GO:0005829">
    <property type="term" value="C:cytosol"/>
    <property type="evidence" value="ECO:0007669"/>
    <property type="project" value="TreeGrafter"/>
</dbReference>
<dbReference type="GO" id="GO:0000287">
    <property type="term" value="F:magnesium ion binding"/>
    <property type="evidence" value="ECO:0007669"/>
    <property type="project" value="TreeGrafter"/>
</dbReference>
<dbReference type="GO" id="GO:0050531">
    <property type="term" value="F:mannosyl-3-phosphoglycerate phosphatase activity"/>
    <property type="evidence" value="ECO:0007669"/>
    <property type="project" value="UniProtKB-UniRule"/>
</dbReference>
<dbReference type="GO" id="GO:0051479">
    <property type="term" value="P:mannosylglycerate biosynthetic process"/>
    <property type="evidence" value="ECO:0007669"/>
    <property type="project" value="InterPro"/>
</dbReference>
<dbReference type="CDD" id="cd07507">
    <property type="entry name" value="HAD_Pase"/>
    <property type="match status" value="1"/>
</dbReference>
<dbReference type="Gene3D" id="3.40.50.1000">
    <property type="entry name" value="HAD superfamily/HAD-like"/>
    <property type="match status" value="1"/>
</dbReference>
<dbReference type="Gene3D" id="3.30.980.20">
    <property type="entry name" value="Putative mannosyl-3-phosphoglycerate phosphatase, domain 2"/>
    <property type="match status" value="1"/>
</dbReference>
<dbReference type="HAMAP" id="MF_00617">
    <property type="entry name" value="MPGP_rel"/>
    <property type="match status" value="1"/>
</dbReference>
<dbReference type="InterPro" id="IPR036412">
    <property type="entry name" value="HAD-like_sf"/>
</dbReference>
<dbReference type="InterPro" id="IPR006381">
    <property type="entry name" value="HAD-SF-IIB-MPGP"/>
</dbReference>
<dbReference type="InterPro" id="IPR006379">
    <property type="entry name" value="HAD-SF_hydro_IIB"/>
</dbReference>
<dbReference type="InterPro" id="IPR023214">
    <property type="entry name" value="HAD_sf"/>
</dbReference>
<dbReference type="InterPro" id="IPR012815">
    <property type="entry name" value="MPG_Pase"/>
</dbReference>
<dbReference type="NCBIfam" id="TIGR01484">
    <property type="entry name" value="HAD-SF-IIB"/>
    <property type="match status" value="1"/>
</dbReference>
<dbReference type="NCBIfam" id="TIGR01486">
    <property type="entry name" value="HAD-SF-IIB-MPGP"/>
    <property type="match status" value="1"/>
</dbReference>
<dbReference type="NCBIfam" id="TIGR02463">
    <property type="entry name" value="MPGP_rel"/>
    <property type="match status" value="1"/>
</dbReference>
<dbReference type="NCBIfam" id="NF002976">
    <property type="entry name" value="PRK03669.1"/>
    <property type="match status" value="1"/>
</dbReference>
<dbReference type="PANTHER" id="PTHR10000:SF8">
    <property type="entry name" value="HAD SUPERFAMILY HYDROLASE-LIKE, TYPE 3"/>
    <property type="match status" value="1"/>
</dbReference>
<dbReference type="PANTHER" id="PTHR10000">
    <property type="entry name" value="PHOSPHOSERINE PHOSPHATASE"/>
    <property type="match status" value="1"/>
</dbReference>
<dbReference type="Pfam" id="PF08282">
    <property type="entry name" value="Hydrolase_3"/>
    <property type="match status" value="1"/>
</dbReference>
<dbReference type="SFLD" id="SFLDG01142">
    <property type="entry name" value="C2.B.2:_Mannosyl-3-phosphoglyc"/>
    <property type="match status" value="1"/>
</dbReference>
<dbReference type="SFLD" id="SFLDS00003">
    <property type="entry name" value="Haloacid_Dehalogenase"/>
    <property type="match status" value="1"/>
</dbReference>
<dbReference type="SUPFAM" id="SSF56784">
    <property type="entry name" value="HAD-like"/>
    <property type="match status" value="1"/>
</dbReference>
<feature type="chain" id="PRO_1000130432" description="Mannosyl-3-phosphoglycerate phosphatase">
    <location>
        <begin position="1"/>
        <end position="271"/>
    </location>
</feature>
<feature type="active site" description="Nucleophile" evidence="1">
    <location>
        <position position="13"/>
    </location>
</feature>
<feature type="binding site" evidence="1">
    <location>
        <position position="13"/>
    </location>
    <ligand>
        <name>Mg(2+)</name>
        <dbReference type="ChEBI" id="CHEBI:18420"/>
    </ligand>
</feature>
<feature type="binding site" evidence="1">
    <location>
        <position position="15"/>
    </location>
    <ligand>
        <name>Mg(2+)</name>
        <dbReference type="ChEBI" id="CHEBI:18420"/>
    </ligand>
</feature>
<feature type="binding site" evidence="1">
    <location>
        <position position="214"/>
    </location>
    <ligand>
        <name>Mg(2+)</name>
        <dbReference type="ChEBI" id="CHEBI:18420"/>
    </ligand>
</feature>
<proteinExistence type="inferred from homology"/>
<protein>
    <recommendedName>
        <fullName evidence="1">Mannosyl-3-phosphoglycerate phosphatase</fullName>
        <shortName evidence="1">MPGP</shortName>
        <ecNumber evidence="1">3.1.3.70</ecNumber>
    </recommendedName>
</protein>